<comment type="function">
    <text evidence="1">One of several proteins that assist in the late maturation steps of the functional core of the 30S ribosomal subunit. Helps release RbfA from mature subunits. May play a role in the assembly of ribosomal proteins into the subunit. Circularly permuted GTPase that catalyzes slow GTP hydrolysis, GTPase activity is stimulated by the 30S ribosomal subunit.</text>
</comment>
<comment type="cofactor">
    <cofactor evidence="1">
        <name>Zn(2+)</name>
        <dbReference type="ChEBI" id="CHEBI:29105"/>
    </cofactor>
    <text evidence="1">Binds 1 zinc ion per subunit.</text>
</comment>
<comment type="subunit">
    <text evidence="1">Monomer. Associates with 30S ribosomal subunit, binds 16S rRNA.</text>
</comment>
<comment type="subcellular location">
    <subcellularLocation>
        <location evidence="1">Cytoplasm</location>
    </subcellularLocation>
</comment>
<comment type="similarity">
    <text evidence="1">Belongs to the TRAFAC class YlqF/YawG GTPase family. RsgA subfamily.</text>
</comment>
<reference key="1">
    <citation type="journal article" date="2003" name="Science">
        <title>Role of mobile DNA in the evolution of vancomycin-resistant Enterococcus faecalis.</title>
        <authorList>
            <person name="Paulsen I.T."/>
            <person name="Banerjei L."/>
            <person name="Myers G.S.A."/>
            <person name="Nelson K.E."/>
            <person name="Seshadri R."/>
            <person name="Read T.D."/>
            <person name="Fouts D.E."/>
            <person name="Eisen J.A."/>
            <person name="Gill S.R."/>
            <person name="Heidelberg J.F."/>
            <person name="Tettelin H."/>
            <person name="Dodson R.J."/>
            <person name="Umayam L.A."/>
            <person name="Brinkac L.M."/>
            <person name="Beanan M.J."/>
            <person name="Daugherty S.C."/>
            <person name="DeBoy R.T."/>
            <person name="Durkin S.A."/>
            <person name="Kolonay J.F."/>
            <person name="Madupu R."/>
            <person name="Nelson W.C."/>
            <person name="Vamathevan J.J."/>
            <person name="Tran B."/>
            <person name="Upton J."/>
            <person name="Hansen T."/>
            <person name="Shetty J."/>
            <person name="Khouri H.M."/>
            <person name="Utterback T.R."/>
            <person name="Radune D."/>
            <person name="Ketchum K.A."/>
            <person name="Dougherty B.A."/>
            <person name="Fraser C.M."/>
        </authorList>
    </citation>
    <scope>NUCLEOTIDE SEQUENCE [LARGE SCALE GENOMIC DNA]</scope>
    <source>
        <strain>ATCC 700802 / V583</strain>
    </source>
</reference>
<evidence type="ECO:0000255" key="1">
    <source>
        <dbReference type="HAMAP-Rule" id="MF_01820"/>
    </source>
</evidence>
<evidence type="ECO:0000255" key="2">
    <source>
        <dbReference type="PROSITE-ProRule" id="PRU01058"/>
    </source>
</evidence>
<organism>
    <name type="scientific">Enterococcus faecalis (strain ATCC 700802 / V583)</name>
    <dbReference type="NCBI Taxonomy" id="226185"/>
    <lineage>
        <taxon>Bacteria</taxon>
        <taxon>Bacillati</taxon>
        <taxon>Bacillota</taxon>
        <taxon>Bacilli</taxon>
        <taxon>Lactobacillales</taxon>
        <taxon>Enterococcaceae</taxon>
        <taxon>Enterococcus</taxon>
    </lineage>
</organism>
<gene>
    <name evidence="1" type="primary">rsgA</name>
    <name type="ordered locus">EF_3119</name>
</gene>
<sequence length="297" mass="33846">MVYLKGQIRKALSGFYYVYADGETYQTRARGNFRNRKITPLVGDEVLFESDNLTDGYVLEILPRRNELVRPPVANVDLGVVVMSMVSPNFSFNLLDRFLVSLEYKDIEPVIYLTKVDLLDEPQRQQVTEIKQIYEALGYAVIASEDVEATKELERFFPERLTVFMGQSGAGKSTLLNQISPELQLATAEISQSLGRGKHTTRHVELIPLYDGLVADTPGFSAIDFLEMEAVELPKQFPEFVAAASHCKFRECMHHKEPGCEVKRQVEAGTIATSRYENYLQFLMEIENRRPVYKKKS</sequence>
<proteinExistence type="inferred from homology"/>
<keyword id="KW-0963">Cytoplasm</keyword>
<keyword id="KW-0342">GTP-binding</keyword>
<keyword id="KW-0378">Hydrolase</keyword>
<keyword id="KW-0479">Metal-binding</keyword>
<keyword id="KW-0547">Nucleotide-binding</keyword>
<keyword id="KW-1185">Reference proteome</keyword>
<keyword id="KW-0690">Ribosome biogenesis</keyword>
<keyword id="KW-0694">RNA-binding</keyword>
<keyword id="KW-0699">rRNA-binding</keyword>
<keyword id="KW-0862">Zinc</keyword>
<protein>
    <recommendedName>
        <fullName evidence="1">Small ribosomal subunit biogenesis GTPase RsgA</fullName>
        <ecNumber evidence="1">3.6.1.-</ecNumber>
    </recommendedName>
</protein>
<dbReference type="EC" id="3.6.1.-" evidence="1"/>
<dbReference type="EMBL" id="AE016830">
    <property type="protein sequence ID" value="AAO82799.1"/>
    <property type="molecule type" value="Genomic_DNA"/>
</dbReference>
<dbReference type="RefSeq" id="NP_816729.1">
    <property type="nucleotide sequence ID" value="NC_004668.1"/>
</dbReference>
<dbReference type="RefSeq" id="WP_002378814.1">
    <property type="nucleotide sequence ID" value="NZ_KE136524.1"/>
</dbReference>
<dbReference type="SMR" id="Q82ZE1"/>
<dbReference type="STRING" id="226185.EF_3119"/>
<dbReference type="EnsemblBacteria" id="AAO82799">
    <property type="protein sequence ID" value="AAO82799"/>
    <property type="gene ID" value="EF_3119"/>
</dbReference>
<dbReference type="KEGG" id="efa:EF3119"/>
<dbReference type="PATRIC" id="fig|226185.45.peg.454"/>
<dbReference type="eggNOG" id="COG1162">
    <property type="taxonomic scope" value="Bacteria"/>
</dbReference>
<dbReference type="HOGENOM" id="CLU_033617_2_1_9"/>
<dbReference type="Proteomes" id="UP000001415">
    <property type="component" value="Chromosome"/>
</dbReference>
<dbReference type="GO" id="GO:0005737">
    <property type="term" value="C:cytoplasm"/>
    <property type="evidence" value="ECO:0007669"/>
    <property type="project" value="UniProtKB-SubCell"/>
</dbReference>
<dbReference type="GO" id="GO:0005525">
    <property type="term" value="F:GTP binding"/>
    <property type="evidence" value="ECO:0007669"/>
    <property type="project" value="UniProtKB-UniRule"/>
</dbReference>
<dbReference type="GO" id="GO:0003924">
    <property type="term" value="F:GTPase activity"/>
    <property type="evidence" value="ECO:0007669"/>
    <property type="project" value="UniProtKB-UniRule"/>
</dbReference>
<dbReference type="GO" id="GO:0046872">
    <property type="term" value="F:metal ion binding"/>
    <property type="evidence" value="ECO:0007669"/>
    <property type="project" value="UniProtKB-KW"/>
</dbReference>
<dbReference type="GO" id="GO:0019843">
    <property type="term" value="F:rRNA binding"/>
    <property type="evidence" value="ECO:0007669"/>
    <property type="project" value="UniProtKB-KW"/>
</dbReference>
<dbReference type="GO" id="GO:0042274">
    <property type="term" value="P:ribosomal small subunit biogenesis"/>
    <property type="evidence" value="ECO:0007669"/>
    <property type="project" value="UniProtKB-UniRule"/>
</dbReference>
<dbReference type="CDD" id="cd04466">
    <property type="entry name" value="S1_YloQ_GTPase"/>
    <property type="match status" value="1"/>
</dbReference>
<dbReference type="CDD" id="cd01854">
    <property type="entry name" value="YjeQ_EngC"/>
    <property type="match status" value="1"/>
</dbReference>
<dbReference type="Gene3D" id="2.40.50.140">
    <property type="entry name" value="Nucleic acid-binding proteins"/>
    <property type="match status" value="1"/>
</dbReference>
<dbReference type="Gene3D" id="3.40.50.300">
    <property type="entry name" value="P-loop containing nucleotide triphosphate hydrolases"/>
    <property type="match status" value="1"/>
</dbReference>
<dbReference type="Gene3D" id="1.10.40.50">
    <property type="entry name" value="Probable gtpase engc, domain 3"/>
    <property type="match status" value="1"/>
</dbReference>
<dbReference type="HAMAP" id="MF_01820">
    <property type="entry name" value="GTPase_RsgA"/>
    <property type="match status" value="1"/>
</dbReference>
<dbReference type="InterPro" id="IPR030378">
    <property type="entry name" value="G_CP_dom"/>
</dbReference>
<dbReference type="InterPro" id="IPR012340">
    <property type="entry name" value="NA-bd_OB-fold"/>
</dbReference>
<dbReference type="InterPro" id="IPR027417">
    <property type="entry name" value="P-loop_NTPase"/>
</dbReference>
<dbReference type="InterPro" id="IPR004881">
    <property type="entry name" value="Ribosome_biogen_GTPase_RsgA"/>
</dbReference>
<dbReference type="InterPro" id="IPR010914">
    <property type="entry name" value="RsgA_GTPase_dom"/>
</dbReference>
<dbReference type="InterPro" id="IPR031944">
    <property type="entry name" value="RsgA_N"/>
</dbReference>
<dbReference type="NCBIfam" id="TIGR00157">
    <property type="entry name" value="ribosome small subunit-dependent GTPase A"/>
    <property type="match status" value="1"/>
</dbReference>
<dbReference type="PANTHER" id="PTHR32120">
    <property type="entry name" value="SMALL RIBOSOMAL SUBUNIT BIOGENESIS GTPASE RSGA"/>
    <property type="match status" value="1"/>
</dbReference>
<dbReference type="PANTHER" id="PTHR32120:SF11">
    <property type="entry name" value="SMALL RIBOSOMAL SUBUNIT BIOGENESIS GTPASE RSGA 1, MITOCHONDRIAL-RELATED"/>
    <property type="match status" value="1"/>
</dbReference>
<dbReference type="Pfam" id="PF03193">
    <property type="entry name" value="RsgA_GTPase"/>
    <property type="match status" value="1"/>
</dbReference>
<dbReference type="Pfam" id="PF16745">
    <property type="entry name" value="RsgA_N"/>
    <property type="match status" value="1"/>
</dbReference>
<dbReference type="SUPFAM" id="SSF50249">
    <property type="entry name" value="Nucleic acid-binding proteins"/>
    <property type="match status" value="1"/>
</dbReference>
<dbReference type="SUPFAM" id="SSF52540">
    <property type="entry name" value="P-loop containing nucleoside triphosphate hydrolases"/>
    <property type="match status" value="1"/>
</dbReference>
<dbReference type="PROSITE" id="PS50936">
    <property type="entry name" value="ENGC_GTPASE"/>
    <property type="match status" value="1"/>
</dbReference>
<dbReference type="PROSITE" id="PS51721">
    <property type="entry name" value="G_CP"/>
    <property type="match status" value="1"/>
</dbReference>
<name>RSGA_ENTFA</name>
<accession>Q82ZE1</accession>
<feature type="chain" id="PRO_0000171475" description="Small ribosomal subunit biogenesis GTPase RsgA">
    <location>
        <begin position="1"/>
        <end position="297"/>
    </location>
</feature>
<feature type="domain" description="CP-type G" evidence="2">
    <location>
        <begin position="65"/>
        <end position="223"/>
    </location>
</feature>
<feature type="binding site" evidence="1">
    <location>
        <begin position="114"/>
        <end position="117"/>
    </location>
    <ligand>
        <name>GTP</name>
        <dbReference type="ChEBI" id="CHEBI:37565"/>
    </ligand>
</feature>
<feature type="binding site" evidence="1">
    <location>
        <begin position="166"/>
        <end position="174"/>
    </location>
    <ligand>
        <name>GTP</name>
        <dbReference type="ChEBI" id="CHEBI:37565"/>
    </ligand>
</feature>
<feature type="binding site" evidence="1">
    <location>
        <position position="247"/>
    </location>
    <ligand>
        <name>Zn(2+)</name>
        <dbReference type="ChEBI" id="CHEBI:29105"/>
    </ligand>
</feature>
<feature type="binding site" evidence="1">
    <location>
        <position position="252"/>
    </location>
    <ligand>
        <name>Zn(2+)</name>
        <dbReference type="ChEBI" id="CHEBI:29105"/>
    </ligand>
</feature>
<feature type="binding site" evidence="1">
    <location>
        <position position="254"/>
    </location>
    <ligand>
        <name>Zn(2+)</name>
        <dbReference type="ChEBI" id="CHEBI:29105"/>
    </ligand>
</feature>
<feature type="binding site" evidence="1">
    <location>
        <position position="260"/>
    </location>
    <ligand>
        <name>Zn(2+)</name>
        <dbReference type="ChEBI" id="CHEBI:29105"/>
    </ligand>
</feature>